<organism>
    <name type="scientific">Chaetomium globosum (strain ATCC 6205 / CBS 148.51 / DSM 1962 / NBRC 6347 / NRRL 1970)</name>
    <name type="common">Soil fungus</name>
    <dbReference type="NCBI Taxonomy" id="306901"/>
    <lineage>
        <taxon>Eukaryota</taxon>
        <taxon>Fungi</taxon>
        <taxon>Dikarya</taxon>
        <taxon>Ascomycota</taxon>
        <taxon>Pezizomycotina</taxon>
        <taxon>Sordariomycetes</taxon>
        <taxon>Sordariomycetidae</taxon>
        <taxon>Sordariales</taxon>
        <taxon>Chaetomiaceae</taxon>
        <taxon>Chaetomium</taxon>
    </lineage>
</organism>
<keyword id="KW-0963">Cytoplasm</keyword>
<keyword id="KW-0539">Nucleus</keyword>
<keyword id="KW-0653">Protein transport</keyword>
<keyword id="KW-1185">Reference proteome</keyword>
<keyword id="KW-0678">Repressor</keyword>
<keyword id="KW-0804">Transcription</keyword>
<keyword id="KW-0805">Transcription regulation</keyword>
<keyword id="KW-0813">Transport</keyword>
<reference key="1">
    <citation type="journal article" date="2015" name="Genome Announc.">
        <title>Draft genome sequence of the cellulolytic fungus Chaetomium globosum.</title>
        <authorList>
            <person name="Cuomo C.A."/>
            <person name="Untereiner W.A."/>
            <person name="Ma L.-J."/>
            <person name="Grabherr M."/>
            <person name="Birren B.W."/>
        </authorList>
    </citation>
    <scope>NUCLEOTIDE SEQUENCE [LARGE SCALE GENOMIC DNA]</scope>
    <source>
        <strain>ATCC 6205 / CBS 148.51 / DSM 1962 / NBRC 6347 / NRRL 1970</strain>
    </source>
</reference>
<name>NACB_CHAGB</name>
<sequence>MADVQERLKKLGASARIGTGKGTPRRKVKRAPARSGADDKKLQQSLKKLNVQPIQAIEEVNMFKSDGNVIHFAAPKVHAAVPSNTFAIYGNGEDKELTELVPGILNQLGPDSLASLRKLAESYQNMQQKKDDDDEIPDLVAGESFENKVE</sequence>
<proteinExistence type="inferred from homology"/>
<dbReference type="EMBL" id="CH408031">
    <property type="protein sequence ID" value="EAQ89667.1"/>
    <property type="molecule type" value="Genomic_DNA"/>
</dbReference>
<dbReference type="RefSeq" id="XP_001222381.1">
    <property type="nucleotide sequence ID" value="XM_001222380.1"/>
</dbReference>
<dbReference type="SMR" id="Q2H4X9"/>
<dbReference type="FunCoup" id="Q2H4X9">
    <property type="interactions" value="1095"/>
</dbReference>
<dbReference type="STRING" id="306901.Q2H4X9"/>
<dbReference type="GeneID" id="4391309"/>
<dbReference type="VEuPathDB" id="FungiDB:CHGG_06286"/>
<dbReference type="eggNOG" id="KOG2240">
    <property type="taxonomic scope" value="Eukaryota"/>
</dbReference>
<dbReference type="HOGENOM" id="CLU_098726_2_0_1"/>
<dbReference type="InParanoid" id="Q2H4X9"/>
<dbReference type="OMA" id="AGDTYME"/>
<dbReference type="OrthoDB" id="8033832at2759"/>
<dbReference type="Proteomes" id="UP000001056">
    <property type="component" value="Unassembled WGS sequence"/>
</dbReference>
<dbReference type="GO" id="GO:0005854">
    <property type="term" value="C:nascent polypeptide-associated complex"/>
    <property type="evidence" value="ECO:0007669"/>
    <property type="project" value="EnsemblFungi"/>
</dbReference>
<dbReference type="GO" id="GO:0005634">
    <property type="term" value="C:nucleus"/>
    <property type="evidence" value="ECO:0007669"/>
    <property type="project" value="UniProtKB-SubCell"/>
</dbReference>
<dbReference type="GO" id="GO:0015031">
    <property type="term" value="P:protein transport"/>
    <property type="evidence" value="ECO:0007669"/>
    <property type="project" value="UniProtKB-KW"/>
</dbReference>
<dbReference type="CDD" id="cd22055">
    <property type="entry name" value="NAC_BTF3"/>
    <property type="match status" value="1"/>
</dbReference>
<dbReference type="FunFam" id="2.20.70.30:FF:000003">
    <property type="entry name" value="Nascent polypeptide-associated complex subunit beta"/>
    <property type="match status" value="1"/>
</dbReference>
<dbReference type="Gene3D" id="2.20.70.30">
    <property type="entry name" value="Nascent polypeptide-associated complex domain"/>
    <property type="match status" value="1"/>
</dbReference>
<dbReference type="InterPro" id="IPR039370">
    <property type="entry name" value="BTF3"/>
</dbReference>
<dbReference type="InterPro" id="IPR038187">
    <property type="entry name" value="NAC_A/B_dom_sf"/>
</dbReference>
<dbReference type="InterPro" id="IPR002715">
    <property type="entry name" value="Nas_poly-pep-assoc_cplx_dom"/>
</dbReference>
<dbReference type="PANTHER" id="PTHR10351">
    <property type="entry name" value="TRANSCRIPTION FACTOR BTF3 FAMILY MEMBER"/>
    <property type="match status" value="1"/>
</dbReference>
<dbReference type="Pfam" id="PF01849">
    <property type="entry name" value="NAC"/>
    <property type="match status" value="1"/>
</dbReference>
<dbReference type="SMART" id="SM01407">
    <property type="entry name" value="NAC"/>
    <property type="match status" value="1"/>
</dbReference>
<dbReference type="PROSITE" id="PS51151">
    <property type="entry name" value="NAC_AB"/>
    <property type="match status" value="1"/>
</dbReference>
<feature type="chain" id="PRO_0000273506" description="Nascent polypeptide-associated complex subunit beta">
    <location>
        <begin position="1"/>
        <end position="150"/>
    </location>
</feature>
<feature type="domain" description="NAC-A/B" evidence="2">
    <location>
        <begin position="36"/>
        <end position="101"/>
    </location>
</feature>
<feature type="region of interest" description="Disordered" evidence="3">
    <location>
        <begin position="1"/>
        <end position="45"/>
    </location>
</feature>
<feature type="region of interest" description="Disordered" evidence="3">
    <location>
        <begin position="123"/>
        <end position="150"/>
    </location>
</feature>
<feature type="compositionally biased region" description="Basic residues" evidence="3">
    <location>
        <begin position="23"/>
        <end position="32"/>
    </location>
</feature>
<comment type="function">
    <text evidence="1">Component of the nascent polypeptide-associated complex (NAC), a dynamic component of the ribosomal exit tunnel, protecting the emerging polypeptides from interaction with other cytoplasmic proteins to ensure appropriate nascent protein targeting. The NAC complex also promotes mitochondrial protein import by enhancing productive ribosome interactions with the outer mitochondrial membrane and blocks the inappropriate interaction of ribosomes translating non-secretory nascent polypeptides with translocation sites in the membrane of the endoplasmic reticulum. EGD1 may act as a transcription factor that exert a negative effect on the expression of several genes that are transcribed by RNA polymerase II.</text>
</comment>
<comment type="subunit">
    <text evidence="1">Part of the nascent polypeptide-associated complex (NAC), consisting of EGD2 and EGD1. NAC associates with ribosomes via EGD1 (By similarity).</text>
</comment>
<comment type="subcellular location">
    <subcellularLocation>
        <location evidence="1">Cytoplasm</location>
    </subcellularLocation>
    <subcellularLocation>
        <location evidence="1">Nucleus</location>
    </subcellularLocation>
    <text evidence="1">Predominantly cytoplasmic, may also transiently localize to the nucleus.</text>
</comment>
<comment type="similarity">
    <text evidence="4">Belongs to the NAC-beta family.</text>
</comment>
<evidence type="ECO:0000250" key="1"/>
<evidence type="ECO:0000255" key="2">
    <source>
        <dbReference type="PROSITE-ProRule" id="PRU00507"/>
    </source>
</evidence>
<evidence type="ECO:0000256" key="3">
    <source>
        <dbReference type="SAM" id="MobiDB-lite"/>
    </source>
</evidence>
<evidence type="ECO:0000305" key="4"/>
<gene>
    <name type="primary">EGD1</name>
    <name type="ORF">CHGG_06286</name>
</gene>
<protein>
    <recommendedName>
        <fullName>Nascent polypeptide-associated complex subunit beta</fullName>
        <shortName>NAC-beta</shortName>
    </recommendedName>
    <alternativeName>
        <fullName>Beta-NAC</fullName>
    </alternativeName>
</protein>
<accession>Q2H4X9</accession>